<keyword id="KW-0002">3D-structure</keyword>
<keyword id="KW-0903">Direct protein sequencing</keyword>
<keyword id="KW-1015">Disulfide bond</keyword>
<keyword id="KW-0872">Ion channel impairing toxin</keyword>
<keyword id="KW-0632">Potassium channel impairing toxin</keyword>
<keyword id="KW-0964">Secreted</keyword>
<keyword id="KW-0732">Signal</keyword>
<keyword id="KW-0800">Toxin</keyword>
<keyword id="KW-1220">Voltage-gated potassium channel impairing toxin</keyword>
<sequence>MKFSMAILLVMAPIMFSLDKCYSADDKCEDSLRREIACTKCRDRVRTDDYFYECCTSESTFKKCQTMLHQ</sequence>
<accession>A0A0R4I951</accession>
<feature type="signal peptide" evidence="2">
    <location>
        <begin position="1"/>
        <end position="23"/>
    </location>
</feature>
<feature type="chain" id="PRO_0000444605" description="Kappa-scoloptoxin(03)-Ssd1a" evidence="5">
    <location>
        <begin position="24"/>
        <end position="70"/>
    </location>
</feature>
<feature type="disulfide bond" evidence="3 7">
    <location>
        <begin position="28"/>
        <end position="55"/>
    </location>
</feature>
<feature type="disulfide bond" evidence="3 7">
    <location>
        <begin position="38"/>
        <end position="54"/>
    </location>
</feature>
<feature type="disulfide bond" evidence="3 7">
    <location>
        <begin position="41"/>
        <end position="64"/>
    </location>
</feature>
<feature type="strand" evidence="8">
    <location>
        <begin position="26"/>
        <end position="30"/>
    </location>
</feature>
<feature type="helix" evidence="8">
    <location>
        <begin position="32"/>
        <end position="44"/>
    </location>
</feature>
<feature type="helix" evidence="8">
    <location>
        <begin position="48"/>
        <end position="52"/>
    </location>
</feature>
<feature type="helix" evidence="8">
    <location>
        <begin position="59"/>
        <end position="69"/>
    </location>
</feature>
<comment type="function">
    <text evidence="3">Toxin that acts on KCNE1 and to a lesser extent KCNE3, the auxiliary subunits of potassium channel Kv7.1/KNCQ1 (PubMed:26307551). The toxin reversibly inhibits the slow delayed rectifier potassium currents (IKs) exhibited by the complex KCNQ1-KCNE1 (IC(50)=652 nM) and by the complex KCNQ1-KCNE3 (30% inhibition at 1 uM) (PubMed:26307551). The positively charged part of toxin binds to the negatively charged residues of the N-terminal amphipathic helix from the KCNE1 extracellular region (PubMed:26307551).</text>
</comment>
<comment type="subcellular location">
    <subcellularLocation>
        <location evidence="2">Secreted</location>
    </subcellularLocation>
</comment>
<comment type="tissue specificity">
    <text evidence="6">Expressed by the venom gland.</text>
</comment>
<comment type="mass spectrometry"/>
<comment type="miscellaneous">
    <text evidence="3">Negative results: does not inhibit the slow delayed rectifier potassium current (IKs) exhibited by the following channels: KCNQ1 alone, the complex KCNQ1-KCNE2, the complex KCNQ1-KCNE4 and the complex KCNMA1-KCNMB1 (KCa1.1-beta-1 subunit) (PubMed:26307551).</text>
</comment>
<comment type="similarity">
    <text evidence="5">Belongs to the scoloptoxin-03 family.</text>
</comment>
<reference key="1">
    <citation type="journal article" date="2012" name="J. Proteome Res.">
        <title>Venomic and transcriptomic analysis of centipede Scolopendra subspinipes dehaani.</title>
        <authorList>
            <person name="Liu Z.C."/>
            <person name="Zhang R."/>
            <person name="Zhao F."/>
            <person name="Chen Z.M."/>
            <person name="Liu H.W."/>
            <person name="Wang Y.J."/>
            <person name="Jiang P."/>
            <person name="Zhang Y."/>
            <person name="Wu Y."/>
            <person name="Ding J.P."/>
            <person name="Lee W.H."/>
            <person name="Zhang Y."/>
        </authorList>
    </citation>
    <scope>NUCLEOTIDE SEQUENCE [MRNA]</scope>
    <scope>PROTEIN SEQUENCE OF 24-49</scope>
    <scope>FUNCTION</scope>
    <scope>MASS SPECTROMETRY</scope>
    <scope>SUBCELLULAR LOCATION</scope>
    <source>
        <tissue>Venom</tissue>
        <tissue>Venom gland</tissue>
    </source>
</reference>
<reference key="2">
    <citation type="journal article" date="2015" name="Sci. Rep.">
        <title>A distinct three-helix centipede toxin SSD609 inhibits I(ks) channels by interacting with the KCNE1 auxiliary subunit.</title>
        <authorList>
            <person name="Sun P."/>
            <person name="Wu F."/>
            <person name="Wen M."/>
            <person name="Yang X."/>
            <person name="Wang C."/>
            <person name="Li Y."/>
            <person name="He S."/>
            <person name="Zhang L."/>
            <person name="Zhang Y."/>
            <person name="Tian C."/>
        </authorList>
    </citation>
    <scope>STRUCTURE BY NMR OF 24-70</scope>
    <scope>SYNTHESIS OF 24-70</scope>
    <scope>DISULFIDE BONDS</scope>
</reference>
<proteinExistence type="evidence at protein level"/>
<dbReference type="EMBL" id="KC144606">
    <property type="status" value="NOT_ANNOTATED_CDS"/>
    <property type="molecule type" value="mRNA"/>
</dbReference>
<dbReference type="PDB" id="2MVT">
    <property type="method" value="NMR"/>
    <property type="chains" value="A=24-70"/>
</dbReference>
<dbReference type="PDBsum" id="2MVT"/>
<dbReference type="SMR" id="A0A0R4I951"/>
<dbReference type="GO" id="GO:0005576">
    <property type="term" value="C:extracellular region"/>
    <property type="evidence" value="ECO:0007669"/>
    <property type="project" value="UniProtKB-SubCell"/>
</dbReference>
<dbReference type="GO" id="GO:0015459">
    <property type="term" value="F:potassium channel regulator activity"/>
    <property type="evidence" value="ECO:0007669"/>
    <property type="project" value="UniProtKB-KW"/>
</dbReference>
<dbReference type="GO" id="GO:0090729">
    <property type="term" value="F:toxin activity"/>
    <property type="evidence" value="ECO:0007669"/>
    <property type="project" value="UniProtKB-KW"/>
</dbReference>
<dbReference type="Gene3D" id="1.10.60.50">
    <property type="match status" value="1"/>
</dbReference>
<protein>
    <recommendedName>
        <fullName evidence="1">Kappa-scoloptoxin(03)-Ssd1a</fullName>
        <shortName evidence="1">Kappa-SLPTX(03)-Ssd1a</shortName>
    </recommendedName>
    <alternativeName>
        <fullName evidence="4">Toxin SSD609</fullName>
    </alternativeName>
</protein>
<evidence type="ECO:0000250" key="1">
    <source>
        <dbReference type="UniProtKB" id="I6RU32"/>
    </source>
</evidence>
<evidence type="ECO:0000269" key="2">
    <source>
    </source>
</evidence>
<evidence type="ECO:0000269" key="3">
    <source>
    </source>
</evidence>
<evidence type="ECO:0000303" key="4">
    <source>
    </source>
</evidence>
<evidence type="ECO:0000305" key="5"/>
<evidence type="ECO:0000305" key="6">
    <source>
    </source>
</evidence>
<evidence type="ECO:0000312" key="7">
    <source>
        <dbReference type="PDB" id="2MVT"/>
    </source>
</evidence>
<evidence type="ECO:0007829" key="8">
    <source>
        <dbReference type="PDB" id="2MVT"/>
    </source>
</evidence>
<organism>
    <name type="scientific">Scolopendra dehaani</name>
    <name type="common">Thai centipede</name>
    <name type="synonym">Scolopendra subspinipes dehaani</name>
    <dbReference type="NCBI Taxonomy" id="2609776"/>
    <lineage>
        <taxon>Eukaryota</taxon>
        <taxon>Metazoa</taxon>
        <taxon>Ecdysozoa</taxon>
        <taxon>Arthropoda</taxon>
        <taxon>Myriapoda</taxon>
        <taxon>Chilopoda</taxon>
        <taxon>Pleurostigmophora</taxon>
        <taxon>Scolopendromorpha</taxon>
        <taxon>Scolopendridae</taxon>
        <taxon>Scolopendra</taxon>
    </lineage>
</organism>
<name>TX31A_SCODE</name>